<name>PDHR_SALTY</name>
<keyword id="KW-0238">DNA-binding</keyword>
<keyword id="KW-1185">Reference proteome</keyword>
<keyword id="KW-0678">Repressor</keyword>
<keyword id="KW-0804">Transcription</keyword>
<keyword id="KW-0805">Transcription regulation</keyword>
<sequence>MAYSKIRQPKLSDVIEQQLEFLILEGTLRPGEKLPPERELAKQFDVSRPSLREAIQRLEAKGLLLRRQGGGTFVQSSLWQSFSDPLVELLSDHPESQFDLLETRHALEGIAAYYAALRSTDEDKDRIRELHHAIELAQESGDLDAESEAVLQYQIAVTEAAHNVVLLHLLRCMEPMLAQNVRQNFELLYARREMLPLVSTHRTRIFEAIMAGKPEEAREASHRHLAFIEEIMLDRSREESRRERALRRLEQRKN</sequence>
<proteinExistence type="inferred from homology"/>
<evidence type="ECO:0000250" key="1"/>
<evidence type="ECO:0000255" key="2">
    <source>
        <dbReference type="PROSITE-ProRule" id="PRU00307"/>
    </source>
</evidence>
<organism>
    <name type="scientific">Salmonella typhimurium (strain LT2 / SGSC1412 / ATCC 700720)</name>
    <dbReference type="NCBI Taxonomy" id="99287"/>
    <lineage>
        <taxon>Bacteria</taxon>
        <taxon>Pseudomonadati</taxon>
        <taxon>Pseudomonadota</taxon>
        <taxon>Gammaproteobacteria</taxon>
        <taxon>Enterobacterales</taxon>
        <taxon>Enterobacteriaceae</taxon>
        <taxon>Salmonella</taxon>
    </lineage>
</organism>
<gene>
    <name type="primary">pdhR</name>
    <name type="ordered locus">STM0151</name>
</gene>
<dbReference type="EMBL" id="AE006468">
    <property type="protein sequence ID" value="AAL19115.1"/>
    <property type="molecule type" value="Genomic_DNA"/>
</dbReference>
<dbReference type="RefSeq" id="NP_459156.1">
    <property type="nucleotide sequence ID" value="NC_003197.2"/>
</dbReference>
<dbReference type="RefSeq" id="WP_000331771.1">
    <property type="nucleotide sequence ID" value="NC_003197.2"/>
</dbReference>
<dbReference type="SMR" id="P0CL10"/>
<dbReference type="STRING" id="99287.STM0151"/>
<dbReference type="PaxDb" id="99287-STM0151"/>
<dbReference type="GeneID" id="1251669"/>
<dbReference type="KEGG" id="stm:STM0151"/>
<dbReference type="PATRIC" id="fig|99287.12.peg.161"/>
<dbReference type="HOGENOM" id="CLU_017584_9_5_6"/>
<dbReference type="OMA" id="ASHNDVM"/>
<dbReference type="PhylomeDB" id="P0CL10"/>
<dbReference type="BioCyc" id="SENT99287:STM0151-MONOMER"/>
<dbReference type="Proteomes" id="UP000001014">
    <property type="component" value="Chromosome"/>
</dbReference>
<dbReference type="GO" id="GO:0003677">
    <property type="term" value="F:DNA binding"/>
    <property type="evidence" value="ECO:0007669"/>
    <property type="project" value="UniProtKB-KW"/>
</dbReference>
<dbReference type="GO" id="GO:0003700">
    <property type="term" value="F:DNA-binding transcription factor activity"/>
    <property type="evidence" value="ECO:0007669"/>
    <property type="project" value="InterPro"/>
</dbReference>
<dbReference type="CDD" id="cd07377">
    <property type="entry name" value="WHTH_GntR"/>
    <property type="match status" value="1"/>
</dbReference>
<dbReference type="FunFam" id="1.10.10.10:FF:000048">
    <property type="entry name" value="Pyruvate dehydrogenase complex transcriptional repressor"/>
    <property type="match status" value="1"/>
</dbReference>
<dbReference type="FunFam" id="1.20.120.530:FF:000001">
    <property type="entry name" value="Pyruvate dehydrogenase complex transcriptional repressor"/>
    <property type="match status" value="1"/>
</dbReference>
<dbReference type="Gene3D" id="1.20.120.530">
    <property type="entry name" value="GntR ligand-binding domain-like"/>
    <property type="match status" value="1"/>
</dbReference>
<dbReference type="Gene3D" id="1.10.10.10">
    <property type="entry name" value="Winged helix-like DNA-binding domain superfamily/Winged helix DNA-binding domain"/>
    <property type="match status" value="1"/>
</dbReference>
<dbReference type="InterPro" id="IPR011711">
    <property type="entry name" value="GntR_C"/>
</dbReference>
<dbReference type="InterPro" id="IPR008920">
    <property type="entry name" value="TF_FadR/GntR_C"/>
</dbReference>
<dbReference type="InterPro" id="IPR000524">
    <property type="entry name" value="Tscrpt_reg_HTH_GntR"/>
</dbReference>
<dbReference type="InterPro" id="IPR036388">
    <property type="entry name" value="WH-like_DNA-bd_sf"/>
</dbReference>
<dbReference type="InterPro" id="IPR036390">
    <property type="entry name" value="WH_DNA-bd_sf"/>
</dbReference>
<dbReference type="NCBIfam" id="NF007001">
    <property type="entry name" value="PRK09464.1"/>
    <property type="match status" value="1"/>
</dbReference>
<dbReference type="PANTHER" id="PTHR43537:SF34">
    <property type="entry name" value="PYRUVATE DEHYDROGENASE COMPLEX REPRESSOR"/>
    <property type="match status" value="1"/>
</dbReference>
<dbReference type="PANTHER" id="PTHR43537">
    <property type="entry name" value="TRANSCRIPTIONAL REGULATOR, GNTR FAMILY"/>
    <property type="match status" value="1"/>
</dbReference>
<dbReference type="Pfam" id="PF07729">
    <property type="entry name" value="FCD"/>
    <property type="match status" value="1"/>
</dbReference>
<dbReference type="Pfam" id="PF00392">
    <property type="entry name" value="GntR"/>
    <property type="match status" value="1"/>
</dbReference>
<dbReference type="PRINTS" id="PR00035">
    <property type="entry name" value="HTHGNTR"/>
</dbReference>
<dbReference type="SMART" id="SM00895">
    <property type="entry name" value="FCD"/>
    <property type="match status" value="1"/>
</dbReference>
<dbReference type="SMART" id="SM00345">
    <property type="entry name" value="HTH_GNTR"/>
    <property type="match status" value="1"/>
</dbReference>
<dbReference type="SUPFAM" id="SSF48008">
    <property type="entry name" value="GntR ligand-binding domain-like"/>
    <property type="match status" value="1"/>
</dbReference>
<dbReference type="SUPFAM" id="SSF46785">
    <property type="entry name" value="Winged helix' DNA-binding domain"/>
    <property type="match status" value="1"/>
</dbReference>
<dbReference type="PROSITE" id="PS50949">
    <property type="entry name" value="HTH_GNTR"/>
    <property type="match status" value="1"/>
</dbReference>
<protein>
    <recommendedName>
        <fullName>Pyruvate dehydrogenase complex repressor</fullName>
    </recommendedName>
</protein>
<comment type="function">
    <text evidence="1">Transcriptional repressor for the pyruvate dehydrogenase complex genes aceEF and lpd.</text>
</comment>
<reference key="1">
    <citation type="journal article" date="2001" name="Nature">
        <title>Complete genome sequence of Salmonella enterica serovar Typhimurium LT2.</title>
        <authorList>
            <person name="McClelland M."/>
            <person name="Sanderson K.E."/>
            <person name="Spieth J."/>
            <person name="Clifton S.W."/>
            <person name="Latreille P."/>
            <person name="Courtney L."/>
            <person name="Porwollik S."/>
            <person name="Ali J."/>
            <person name="Dante M."/>
            <person name="Du F."/>
            <person name="Hou S."/>
            <person name="Layman D."/>
            <person name="Leonard S."/>
            <person name="Nguyen C."/>
            <person name="Scott K."/>
            <person name="Holmes A."/>
            <person name="Grewal N."/>
            <person name="Mulvaney E."/>
            <person name="Ryan E."/>
            <person name="Sun H."/>
            <person name="Florea L."/>
            <person name="Miller W."/>
            <person name="Stoneking T."/>
            <person name="Nhan M."/>
            <person name="Waterston R."/>
            <person name="Wilson R.K."/>
        </authorList>
    </citation>
    <scope>NUCLEOTIDE SEQUENCE [LARGE SCALE GENOMIC DNA]</scope>
    <source>
        <strain>LT2 / SGSC1412 / ATCC 700720</strain>
    </source>
</reference>
<feature type="chain" id="PRO_0000050666" description="Pyruvate dehydrogenase complex repressor">
    <location>
        <begin position="1"/>
        <end position="254"/>
    </location>
</feature>
<feature type="domain" description="HTH gntR-type" evidence="2">
    <location>
        <begin position="9"/>
        <end position="77"/>
    </location>
</feature>
<feature type="DNA-binding region" description="H-T-H motif" evidence="2">
    <location>
        <begin position="37"/>
        <end position="56"/>
    </location>
</feature>
<accession>P0CL10</accession>
<accession>P0A2S2</accession>
<accession>Q9L4H9</accession>